<evidence type="ECO:0000255" key="1">
    <source>
        <dbReference type="HAMAP-Rule" id="MF_00724"/>
    </source>
</evidence>
<name>FLIE_ERWT9</name>
<organism>
    <name type="scientific">Erwinia tasmaniensis (strain DSM 17950 / CFBP 7177 / CIP 109463 / NCPPB 4357 / Et1/99)</name>
    <dbReference type="NCBI Taxonomy" id="465817"/>
    <lineage>
        <taxon>Bacteria</taxon>
        <taxon>Pseudomonadati</taxon>
        <taxon>Pseudomonadota</taxon>
        <taxon>Gammaproteobacteria</taxon>
        <taxon>Enterobacterales</taxon>
        <taxon>Erwiniaceae</taxon>
        <taxon>Erwinia</taxon>
    </lineage>
</organism>
<proteinExistence type="inferred from homology"/>
<comment type="subcellular location">
    <subcellularLocation>
        <location evidence="1">Bacterial flagellum basal body</location>
    </subcellularLocation>
</comment>
<comment type="similarity">
    <text evidence="1">Belongs to the FliE family.</text>
</comment>
<keyword id="KW-0975">Bacterial flagellum</keyword>
<keyword id="KW-1185">Reference proteome</keyword>
<gene>
    <name evidence="1" type="primary">fliE</name>
    <name type="ordered locus">ETA_19870</name>
</gene>
<feature type="chain" id="PRO_1000132659" description="Flagellar hook-basal body complex protein FliE">
    <location>
        <begin position="1"/>
        <end position="103"/>
    </location>
</feature>
<dbReference type="EMBL" id="CU468135">
    <property type="protein sequence ID" value="CAO97033.1"/>
    <property type="molecule type" value="Genomic_DNA"/>
</dbReference>
<dbReference type="RefSeq" id="WP_012441711.1">
    <property type="nucleotide sequence ID" value="NC_010694.1"/>
</dbReference>
<dbReference type="SMR" id="B2VDN8"/>
<dbReference type="STRING" id="465817.ETA_19870"/>
<dbReference type="KEGG" id="eta:ETA_19870"/>
<dbReference type="eggNOG" id="COG1677">
    <property type="taxonomic scope" value="Bacteria"/>
</dbReference>
<dbReference type="HOGENOM" id="CLU_147249_0_2_6"/>
<dbReference type="OrthoDB" id="8909229at2"/>
<dbReference type="Proteomes" id="UP000001726">
    <property type="component" value="Chromosome"/>
</dbReference>
<dbReference type="GO" id="GO:0009425">
    <property type="term" value="C:bacterial-type flagellum basal body"/>
    <property type="evidence" value="ECO:0007669"/>
    <property type="project" value="UniProtKB-SubCell"/>
</dbReference>
<dbReference type="GO" id="GO:0003774">
    <property type="term" value="F:cytoskeletal motor activity"/>
    <property type="evidence" value="ECO:0007669"/>
    <property type="project" value="InterPro"/>
</dbReference>
<dbReference type="GO" id="GO:0005198">
    <property type="term" value="F:structural molecule activity"/>
    <property type="evidence" value="ECO:0007669"/>
    <property type="project" value="InterPro"/>
</dbReference>
<dbReference type="GO" id="GO:0071973">
    <property type="term" value="P:bacterial-type flagellum-dependent cell motility"/>
    <property type="evidence" value="ECO:0007669"/>
    <property type="project" value="InterPro"/>
</dbReference>
<dbReference type="HAMAP" id="MF_00724">
    <property type="entry name" value="FliE"/>
    <property type="match status" value="1"/>
</dbReference>
<dbReference type="InterPro" id="IPR001624">
    <property type="entry name" value="FliE"/>
</dbReference>
<dbReference type="NCBIfam" id="TIGR00205">
    <property type="entry name" value="fliE"/>
    <property type="match status" value="1"/>
</dbReference>
<dbReference type="PANTHER" id="PTHR34653">
    <property type="match status" value="1"/>
</dbReference>
<dbReference type="PANTHER" id="PTHR34653:SF1">
    <property type="entry name" value="FLAGELLAR HOOK-BASAL BODY COMPLEX PROTEIN FLIE"/>
    <property type="match status" value="1"/>
</dbReference>
<dbReference type="Pfam" id="PF02049">
    <property type="entry name" value="FliE"/>
    <property type="match status" value="1"/>
</dbReference>
<dbReference type="PRINTS" id="PR01006">
    <property type="entry name" value="FLGHOOKFLIE"/>
</dbReference>
<reference key="1">
    <citation type="journal article" date="2008" name="Environ. Microbiol.">
        <title>The genome of Erwinia tasmaniensis strain Et1/99, a non-pathogenic bacterium in the genus Erwinia.</title>
        <authorList>
            <person name="Kube M."/>
            <person name="Migdoll A.M."/>
            <person name="Mueller I."/>
            <person name="Kuhl H."/>
            <person name="Beck A."/>
            <person name="Reinhardt R."/>
            <person name="Geider K."/>
        </authorList>
    </citation>
    <scope>NUCLEOTIDE SEQUENCE [LARGE SCALE GENOMIC DNA]</scope>
    <source>
        <strain>DSM 17950 / CFBP 7177 / CIP 109463 / NCPPB 4357 / Et1/99</strain>
    </source>
</reference>
<protein>
    <recommendedName>
        <fullName evidence="1">Flagellar hook-basal body complex protein FliE</fullName>
    </recommendedName>
</protein>
<sequence length="103" mass="10940">MAIQGIESVMQAMQTAALQASGSKTDDASSADFGAEMKAALNKISETQTAARSQAQAFEMGKEGVSLNDVMVDLQKSSVSMQMGIQVRNKLVSAYSDIMNMQV</sequence>
<accession>B2VDN8</accession>